<name>RECO_RICTY</name>
<comment type="function">
    <text evidence="1">Involved in DNA repair and RecF pathway recombination.</text>
</comment>
<comment type="similarity">
    <text evidence="1">Belongs to the RecO family.</text>
</comment>
<dbReference type="EMBL" id="AE017197">
    <property type="protein sequence ID" value="AAU04005.1"/>
    <property type="molecule type" value="Genomic_DNA"/>
</dbReference>
<dbReference type="RefSeq" id="WP_011190986.1">
    <property type="nucleotide sequence ID" value="NC_006142.1"/>
</dbReference>
<dbReference type="SMR" id="Q68WI7"/>
<dbReference type="KEGG" id="rty:RT0536"/>
<dbReference type="eggNOG" id="COG1381">
    <property type="taxonomic scope" value="Bacteria"/>
</dbReference>
<dbReference type="HOGENOM" id="CLU_086029_0_0_5"/>
<dbReference type="OrthoDB" id="9804792at2"/>
<dbReference type="Proteomes" id="UP000000604">
    <property type="component" value="Chromosome"/>
</dbReference>
<dbReference type="GO" id="GO:0043590">
    <property type="term" value="C:bacterial nucleoid"/>
    <property type="evidence" value="ECO:0007669"/>
    <property type="project" value="TreeGrafter"/>
</dbReference>
<dbReference type="GO" id="GO:0006310">
    <property type="term" value="P:DNA recombination"/>
    <property type="evidence" value="ECO:0007669"/>
    <property type="project" value="UniProtKB-UniRule"/>
</dbReference>
<dbReference type="GO" id="GO:0006302">
    <property type="term" value="P:double-strand break repair"/>
    <property type="evidence" value="ECO:0007669"/>
    <property type="project" value="TreeGrafter"/>
</dbReference>
<dbReference type="Gene3D" id="2.40.50.140">
    <property type="entry name" value="Nucleic acid-binding proteins"/>
    <property type="match status" value="1"/>
</dbReference>
<dbReference type="Gene3D" id="1.20.1440.120">
    <property type="entry name" value="Recombination protein O, C-terminal domain"/>
    <property type="match status" value="1"/>
</dbReference>
<dbReference type="HAMAP" id="MF_00201">
    <property type="entry name" value="RecO"/>
    <property type="match status" value="1"/>
</dbReference>
<dbReference type="InterPro" id="IPR037278">
    <property type="entry name" value="ARFGAP/RecO"/>
</dbReference>
<dbReference type="InterPro" id="IPR022572">
    <property type="entry name" value="DNA_rep/recomb_RecO_N"/>
</dbReference>
<dbReference type="InterPro" id="IPR012340">
    <property type="entry name" value="NA-bd_OB-fold"/>
</dbReference>
<dbReference type="InterPro" id="IPR003717">
    <property type="entry name" value="RecO"/>
</dbReference>
<dbReference type="InterPro" id="IPR042242">
    <property type="entry name" value="RecO_C"/>
</dbReference>
<dbReference type="NCBIfam" id="TIGR00613">
    <property type="entry name" value="reco"/>
    <property type="match status" value="1"/>
</dbReference>
<dbReference type="PANTHER" id="PTHR33991">
    <property type="entry name" value="DNA REPAIR PROTEIN RECO"/>
    <property type="match status" value="1"/>
</dbReference>
<dbReference type="PANTHER" id="PTHR33991:SF1">
    <property type="entry name" value="DNA REPAIR PROTEIN RECO"/>
    <property type="match status" value="1"/>
</dbReference>
<dbReference type="Pfam" id="PF02565">
    <property type="entry name" value="RecO_C"/>
    <property type="match status" value="1"/>
</dbReference>
<dbReference type="Pfam" id="PF11967">
    <property type="entry name" value="RecO_N"/>
    <property type="match status" value="1"/>
</dbReference>
<dbReference type="SUPFAM" id="SSF57863">
    <property type="entry name" value="ArfGap/RecO-like zinc finger"/>
    <property type="match status" value="1"/>
</dbReference>
<proteinExistence type="inferred from homology"/>
<keyword id="KW-0227">DNA damage</keyword>
<keyword id="KW-0233">DNA recombination</keyword>
<keyword id="KW-0234">DNA repair</keyword>
<evidence type="ECO:0000255" key="1">
    <source>
        <dbReference type="HAMAP-Rule" id="MF_00201"/>
    </source>
</evidence>
<organism>
    <name type="scientific">Rickettsia typhi (strain ATCC VR-144 / Wilmington)</name>
    <dbReference type="NCBI Taxonomy" id="257363"/>
    <lineage>
        <taxon>Bacteria</taxon>
        <taxon>Pseudomonadati</taxon>
        <taxon>Pseudomonadota</taxon>
        <taxon>Alphaproteobacteria</taxon>
        <taxon>Rickettsiales</taxon>
        <taxon>Rickettsiaceae</taxon>
        <taxon>Rickettsieae</taxon>
        <taxon>Rickettsia</taxon>
        <taxon>typhus group</taxon>
    </lineage>
</organism>
<gene>
    <name evidence="1" type="primary">recO</name>
    <name type="ordered locus">RT0536</name>
</gene>
<sequence length="236" mass="27802">MNIKDIGVIISKKPLKENTFIIRVFTKNHGLYSGVIKASSKKNKFIYQEGNIVDFLWQARLHEHIGIAKCELIKSYTGYFIINKAKLYAFNSVKFLIQELFHEREEHSIFFAFLINYLDNLSKNFCFRDYINFELNLLAETGYKIDLTKCCVSHVTTDLTYVSPKSARALSYKVGKPYRDKLLILPKFLLSEDSKITLEEKKQALTLTNYFFNRYLFHNNRQVEARKEFIEYITNI</sequence>
<feature type="chain" id="PRO_1000193424" description="DNA repair protein RecO">
    <location>
        <begin position="1"/>
        <end position="236"/>
    </location>
</feature>
<protein>
    <recommendedName>
        <fullName evidence="1">DNA repair protein RecO</fullName>
    </recommendedName>
    <alternativeName>
        <fullName evidence="1">Recombination protein O</fullName>
    </alternativeName>
</protein>
<accession>Q68WI7</accession>
<reference key="1">
    <citation type="journal article" date="2004" name="J. Bacteriol.">
        <title>Complete genome sequence of Rickettsia typhi and comparison with sequences of other Rickettsiae.</title>
        <authorList>
            <person name="McLeod M.P."/>
            <person name="Qin X."/>
            <person name="Karpathy S.E."/>
            <person name="Gioia J."/>
            <person name="Highlander S.K."/>
            <person name="Fox G.E."/>
            <person name="McNeill T.Z."/>
            <person name="Jiang H."/>
            <person name="Muzny D."/>
            <person name="Jacob L.S."/>
            <person name="Hawes A.C."/>
            <person name="Sodergren E."/>
            <person name="Gill R."/>
            <person name="Hume J."/>
            <person name="Morgan M."/>
            <person name="Fan G."/>
            <person name="Amin A.G."/>
            <person name="Gibbs R.A."/>
            <person name="Hong C."/>
            <person name="Yu X.-J."/>
            <person name="Walker D.H."/>
            <person name="Weinstock G.M."/>
        </authorList>
    </citation>
    <scope>NUCLEOTIDE SEQUENCE [LARGE SCALE GENOMIC DNA]</scope>
    <source>
        <strain>ATCC VR-144 / Wilmington</strain>
    </source>
</reference>